<protein>
    <recommendedName>
        <fullName evidence="1">Lysine--tRNA ligase</fullName>
        <ecNumber evidence="1">6.1.1.6</ecNumber>
    </recommendedName>
    <alternativeName>
        <fullName evidence="1">Lysyl-tRNA synthetase</fullName>
        <shortName evidence="1">LysRS</shortName>
    </alternativeName>
</protein>
<organism>
    <name type="scientific">Salmonella newport (strain SL254)</name>
    <dbReference type="NCBI Taxonomy" id="423368"/>
    <lineage>
        <taxon>Bacteria</taxon>
        <taxon>Pseudomonadati</taxon>
        <taxon>Pseudomonadota</taxon>
        <taxon>Gammaproteobacteria</taxon>
        <taxon>Enterobacterales</taxon>
        <taxon>Enterobacteriaceae</taxon>
        <taxon>Salmonella</taxon>
    </lineage>
</organism>
<gene>
    <name evidence="1" type="primary">lysS</name>
    <name type="ordered locus">SNSL254_A3274</name>
</gene>
<name>SYK_SALNS</name>
<reference key="1">
    <citation type="journal article" date="2011" name="J. Bacteriol.">
        <title>Comparative genomics of 28 Salmonella enterica isolates: evidence for CRISPR-mediated adaptive sublineage evolution.</title>
        <authorList>
            <person name="Fricke W.F."/>
            <person name="Mammel M.K."/>
            <person name="McDermott P.F."/>
            <person name="Tartera C."/>
            <person name="White D.G."/>
            <person name="Leclerc J.E."/>
            <person name="Ravel J."/>
            <person name="Cebula T.A."/>
        </authorList>
    </citation>
    <scope>NUCLEOTIDE SEQUENCE [LARGE SCALE GENOMIC DNA]</scope>
    <source>
        <strain>SL254</strain>
    </source>
</reference>
<proteinExistence type="inferred from homology"/>
<sequence length="505" mass="57575">MSEQNAQGADEVVDLNNEMKARREKLAALREQGIPFPNDFRRDRTSDQLHAEFDAKEAEELEALNIEVSVAGRMMTRRIMGKASFVTLQDVGGRIQLYVARDDLPEGVYNEQFKKWDLGDILGAKGKLFKTKTGELSIHCTELRLLTKALRPLPDKFHGLQDQEARYRQRYLDLISNDESRNTFKTRSKILAGIRQFMVARGFMEVETPMMQVIPGGASARPFITHHNALDLDMYLRIAPELYLKRLVVGGFERVFEINRNFRNEGISVRHNPEFTMMELYMAYADYKDLIELTESLFRTLAQDVLGTTQVPYGDEVFDFGKPFEKLTMREAIKKYRPETDMADLDNFDSAKAIAESIGIHVEKSWGLGRIVTEIFDEVAEAHLIQPTFITEYPAEVSPLARRNDVNPEITDRFEFFIGGREIGNGFSELNDAEDQAQRFLDQVNAKAAGDDEAMFYDEDYVTALEHGLPPTAGLGIGIDRMVMLFTNSHTIRDVILFPAMRPVK</sequence>
<dbReference type="EC" id="6.1.1.6" evidence="1"/>
<dbReference type="EMBL" id="CP001113">
    <property type="protein sequence ID" value="ACF62266.1"/>
    <property type="molecule type" value="Genomic_DNA"/>
</dbReference>
<dbReference type="RefSeq" id="WP_000003339.1">
    <property type="nucleotide sequence ID" value="NZ_CCMR01000001.1"/>
</dbReference>
<dbReference type="SMR" id="B4T535"/>
<dbReference type="KEGG" id="see:SNSL254_A3274"/>
<dbReference type="HOGENOM" id="CLU_008255_6_0_6"/>
<dbReference type="Proteomes" id="UP000008824">
    <property type="component" value="Chromosome"/>
</dbReference>
<dbReference type="GO" id="GO:0005829">
    <property type="term" value="C:cytosol"/>
    <property type="evidence" value="ECO:0007669"/>
    <property type="project" value="TreeGrafter"/>
</dbReference>
<dbReference type="GO" id="GO:0005524">
    <property type="term" value="F:ATP binding"/>
    <property type="evidence" value="ECO:0007669"/>
    <property type="project" value="UniProtKB-UniRule"/>
</dbReference>
<dbReference type="GO" id="GO:0004824">
    <property type="term" value="F:lysine-tRNA ligase activity"/>
    <property type="evidence" value="ECO:0007669"/>
    <property type="project" value="UniProtKB-UniRule"/>
</dbReference>
<dbReference type="GO" id="GO:0000287">
    <property type="term" value="F:magnesium ion binding"/>
    <property type="evidence" value="ECO:0007669"/>
    <property type="project" value="UniProtKB-UniRule"/>
</dbReference>
<dbReference type="GO" id="GO:0000049">
    <property type="term" value="F:tRNA binding"/>
    <property type="evidence" value="ECO:0007669"/>
    <property type="project" value="TreeGrafter"/>
</dbReference>
<dbReference type="GO" id="GO:0006430">
    <property type="term" value="P:lysyl-tRNA aminoacylation"/>
    <property type="evidence" value="ECO:0007669"/>
    <property type="project" value="UniProtKB-UniRule"/>
</dbReference>
<dbReference type="CDD" id="cd00775">
    <property type="entry name" value="LysRS_core"/>
    <property type="match status" value="1"/>
</dbReference>
<dbReference type="CDD" id="cd04322">
    <property type="entry name" value="LysRS_N"/>
    <property type="match status" value="1"/>
</dbReference>
<dbReference type="FunFam" id="2.40.50.140:FF:000024">
    <property type="entry name" value="Lysine--tRNA ligase"/>
    <property type="match status" value="1"/>
</dbReference>
<dbReference type="FunFam" id="3.30.930.10:FF:000001">
    <property type="entry name" value="Lysine--tRNA ligase"/>
    <property type="match status" value="1"/>
</dbReference>
<dbReference type="Gene3D" id="3.30.930.10">
    <property type="entry name" value="Bira Bifunctional Protein, Domain 2"/>
    <property type="match status" value="1"/>
</dbReference>
<dbReference type="Gene3D" id="2.40.50.140">
    <property type="entry name" value="Nucleic acid-binding proteins"/>
    <property type="match status" value="1"/>
</dbReference>
<dbReference type="HAMAP" id="MF_00252">
    <property type="entry name" value="Lys_tRNA_synth_class2"/>
    <property type="match status" value="1"/>
</dbReference>
<dbReference type="InterPro" id="IPR004364">
    <property type="entry name" value="Aa-tRNA-synt_II"/>
</dbReference>
<dbReference type="InterPro" id="IPR006195">
    <property type="entry name" value="aa-tRNA-synth_II"/>
</dbReference>
<dbReference type="InterPro" id="IPR045864">
    <property type="entry name" value="aa-tRNA-synth_II/BPL/LPL"/>
</dbReference>
<dbReference type="InterPro" id="IPR002313">
    <property type="entry name" value="Lys-tRNA-ligase_II"/>
</dbReference>
<dbReference type="InterPro" id="IPR034762">
    <property type="entry name" value="Lys-tRNA-ligase_II_bac/euk"/>
</dbReference>
<dbReference type="InterPro" id="IPR044136">
    <property type="entry name" value="Lys-tRNA-ligase_II_N"/>
</dbReference>
<dbReference type="InterPro" id="IPR018149">
    <property type="entry name" value="Lys-tRNA-synth_II_C"/>
</dbReference>
<dbReference type="InterPro" id="IPR012340">
    <property type="entry name" value="NA-bd_OB-fold"/>
</dbReference>
<dbReference type="InterPro" id="IPR004365">
    <property type="entry name" value="NA-bd_OB_tRNA"/>
</dbReference>
<dbReference type="NCBIfam" id="TIGR00499">
    <property type="entry name" value="lysS_bact"/>
    <property type="match status" value="1"/>
</dbReference>
<dbReference type="NCBIfam" id="NF001756">
    <property type="entry name" value="PRK00484.1"/>
    <property type="match status" value="1"/>
</dbReference>
<dbReference type="NCBIfam" id="NF009101">
    <property type="entry name" value="PRK12445.1"/>
    <property type="match status" value="1"/>
</dbReference>
<dbReference type="PANTHER" id="PTHR42918:SF15">
    <property type="entry name" value="LYSINE--TRNA LIGASE, CHLOROPLASTIC_MITOCHONDRIAL"/>
    <property type="match status" value="1"/>
</dbReference>
<dbReference type="PANTHER" id="PTHR42918">
    <property type="entry name" value="LYSYL-TRNA SYNTHETASE"/>
    <property type="match status" value="1"/>
</dbReference>
<dbReference type="Pfam" id="PF00152">
    <property type="entry name" value="tRNA-synt_2"/>
    <property type="match status" value="1"/>
</dbReference>
<dbReference type="Pfam" id="PF01336">
    <property type="entry name" value="tRNA_anti-codon"/>
    <property type="match status" value="1"/>
</dbReference>
<dbReference type="PIRSF" id="PIRSF039101">
    <property type="entry name" value="LysRS2"/>
    <property type="match status" value="1"/>
</dbReference>
<dbReference type="PRINTS" id="PR00982">
    <property type="entry name" value="TRNASYNTHLYS"/>
</dbReference>
<dbReference type="SUPFAM" id="SSF55681">
    <property type="entry name" value="Class II aaRS and biotin synthetases"/>
    <property type="match status" value="1"/>
</dbReference>
<dbReference type="SUPFAM" id="SSF50249">
    <property type="entry name" value="Nucleic acid-binding proteins"/>
    <property type="match status" value="1"/>
</dbReference>
<dbReference type="PROSITE" id="PS50862">
    <property type="entry name" value="AA_TRNA_LIGASE_II"/>
    <property type="match status" value="1"/>
</dbReference>
<accession>B4T535</accession>
<keyword id="KW-0030">Aminoacyl-tRNA synthetase</keyword>
<keyword id="KW-0067">ATP-binding</keyword>
<keyword id="KW-0963">Cytoplasm</keyword>
<keyword id="KW-0436">Ligase</keyword>
<keyword id="KW-0460">Magnesium</keyword>
<keyword id="KW-0479">Metal-binding</keyword>
<keyword id="KW-0547">Nucleotide-binding</keyword>
<keyword id="KW-0648">Protein biosynthesis</keyword>
<evidence type="ECO:0000255" key="1">
    <source>
        <dbReference type="HAMAP-Rule" id="MF_00252"/>
    </source>
</evidence>
<feature type="chain" id="PRO_1000101145" description="Lysine--tRNA ligase">
    <location>
        <begin position="1"/>
        <end position="505"/>
    </location>
</feature>
<feature type="binding site" evidence="1">
    <location>
        <position position="415"/>
    </location>
    <ligand>
        <name>Mg(2+)</name>
        <dbReference type="ChEBI" id="CHEBI:18420"/>
        <label>1</label>
    </ligand>
</feature>
<feature type="binding site" evidence="1">
    <location>
        <position position="422"/>
    </location>
    <ligand>
        <name>Mg(2+)</name>
        <dbReference type="ChEBI" id="CHEBI:18420"/>
        <label>1</label>
    </ligand>
</feature>
<feature type="binding site" evidence="1">
    <location>
        <position position="422"/>
    </location>
    <ligand>
        <name>Mg(2+)</name>
        <dbReference type="ChEBI" id="CHEBI:18420"/>
        <label>2</label>
    </ligand>
</feature>
<comment type="catalytic activity">
    <reaction evidence="1">
        <text>tRNA(Lys) + L-lysine + ATP = L-lysyl-tRNA(Lys) + AMP + diphosphate</text>
        <dbReference type="Rhea" id="RHEA:20792"/>
        <dbReference type="Rhea" id="RHEA-COMP:9696"/>
        <dbReference type="Rhea" id="RHEA-COMP:9697"/>
        <dbReference type="ChEBI" id="CHEBI:30616"/>
        <dbReference type="ChEBI" id="CHEBI:32551"/>
        <dbReference type="ChEBI" id="CHEBI:33019"/>
        <dbReference type="ChEBI" id="CHEBI:78442"/>
        <dbReference type="ChEBI" id="CHEBI:78529"/>
        <dbReference type="ChEBI" id="CHEBI:456215"/>
        <dbReference type="EC" id="6.1.1.6"/>
    </reaction>
</comment>
<comment type="cofactor">
    <cofactor evidence="1">
        <name>Mg(2+)</name>
        <dbReference type="ChEBI" id="CHEBI:18420"/>
    </cofactor>
    <text evidence="1">Binds 3 Mg(2+) ions per subunit.</text>
</comment>
<comment type="subunit">
    <text evidence="1">Homodimer.</text>
</comment>
<comment type="subcellular location">
    <subcellularLocation>
        <location evidence="1">Cytoplasm</location>
    </subcellularLocation>
</comment>
<comment type="similarity">
    <text evidence="1">Belongs to the class-II aminoacyl-tRNA synthetase family.</text>
</comment>